<feature type="chain" id="PRO_0000234999" description="Serine hydroxymethyltransferase">
    <location>
        <begin position="1"/>
        <end position="411"/>
    </location>
</feature>
<feature type="binding site" evidence="1">
    <location>
        <position position="113"/>
    </location>
    <ligand>
        <name>(6S)-5,6,7,8-tetrahydrofolate</name>
        <dbReference type="ChEBI" id="CHEBI:57453"/>
    </ligand>
</feature>
<feature type="binding site" evidence="1">
    <location>
        <begin position="117"/>
        <end position="119"/>
    </location>
    <ligand>
        <name>(6S)-5,6,7,8-tetrahydrofolate</name>
        <dbReference type="ChEBI" id="CHEBI:57453"/>
    </ligand>
</feature>
<feature type="binding site" evidence="1">
    <location>
        <begin position="346"/>
        <end position="348"/>
    </location>
    <ligand>
        <name>(6S)-5,6,7,8-tetrahydrofolate</name>
        <dbReference type="ChEBI" id="CHEBI:57453"/>
    </ligand>
</feature>
<feature type="site" description="Plays an important role in substrate specificity" evidence="1">
    <location>
        <position position="221"/>
    </location>
</feature>
<feature type="modified residue" description="N6-(pyridoxal phosphate)lysine" evidence="1">
    <location>
        <position position="222"/>
    </location>
</feature>
<dbReference type="EC" id="2.1.2.1" evidence="1"/>
<dbReference type="EMBL" id="CP000095">
    <property type="protein sequence ID" value="AAZ59112.1"/>
    <property type="molecule type" value="Genomic_DNA"/>
</dbReference>
<dbReference type="RefSeq" id="WP_011294257.1">
    <property type="nucleotide sequence ID" value="NC_007335.2"/>
</dbReference>
<dbReference type="SMR" id="Q46HB6"/>
<dbReference type="STRING" id="59920.PMN2A_1624"/>
<dbReference type="KEGG" id="pmn:PMN2A_1624"/>
<dbReference type="HOGENOM" id="CLU_022477_2_1_3"/>
<dbReference type="OrthoDB" id="9803846at2"/>
<dbReference type="PhylomeDB" id="Q46HB6"/>
<dbReference type="UniPathway" id="UPA00193"/>
<dbReference type="UniPathway" id="UPA00288">
    <property type="reaction ID" value="UER01023"/>
</dbReference>
<dbReference type="Proteomes" id="UP000002535">
    <property type="component" value="Chromosome"/>
</dbReference>
<dbReference type="GO" id="GO:0005829">
    <property type="term" value="C:cytosol"/>
    <property type="evidence" value="ECO:0007669"/>
    <property type="project" value="TreeGrafter"/>
</dbReference>
<dbReference type="GO" id="GO:0004372">
    <property type="term" value="F:glycine hydroxymethyltransferase activity"/>
    <property type="evidence" value="ECO:0007669"/>
    <property type="project" value="UniProtKB-UniRule"/>
</dbReference>
<dbReference type="GO" id="GO:0030170">
    <property type="term" value="F:pyridoxal phosphate binding"/>
    <property type="evidence" value="ECO:0007669"/>
    <property type="project" value="UniProtKB-UniRule"/>
</dbReference>
<dbReference type="GO" id="GO:0019264">
    <property type="term" value="P:glycine biosynthetic process from serine"/>
    <property type="evidence" value="ECO:0007669"/>
    <property type="project" value="UniProtKB-UniRule"/>
</dbReference>
<dbReference type="GO" id="GO:0035999">
    <property type="term" value="P:tetrahydrofolate interconversion"/>
    <property type="evidence" value="ECO:0007669"/>
    <property type="project" value="UniProtKB-UniRule"/>
</dbReference>
<dbReference type="CDD" id="cd00378">
    <property type="entry name" value="SHMT"/>
    <property type="match status" value="1"/>
</dbReference>
<dbReference type="FunFam" id="3.40.640.10:FF:000001">
    <property type="entry name" value="Serine hydroxymethyltransferase"/>
    <property type="match status" value="1"/>
</dbReference>
<dbReference type="Gene3D" id="3.90.1150.10">
    <property type="entry name" value="Aspartate Aminotransferase, domain 1"/>
    <property type="match status" value="1"/>
</dbReference>
<dbReference type="Gene3D" id="3.40.640.10">
    <property type="entry name" value="Type I PLP-dependent aspartate aminotransferase-like (Major domain)"/>
    <property type="match status" value="1"/>
</dbReference>
<dbReference type="HAMAP" id="MF_00051">
    <property type="entry name" value="SHMT"/>
    <property type="match status" value="1"/>
</dbReference>
<dbReference type="InterPro" id="IPR015424">
    <property type="entry name" value="PyrdxlP-dep_Trfase"/>
</dbReference>
<dbReference type="InterPro" id="IPR015421">
    <property type="entry name" value="PyrdxlP-dep_Trfase_major"/>
</dbReference>
<dbReference type="InterPro" id="IPR015422">
    <property type="entry name" value="PyrdxlP-dep_Trfase_small"/>
</dbReference>
<dbReference type="InterPro" id="IPR001085">
    <property type="entry name" value="Ser_HO-MeTrfase"/>
</dbReference>
<dbReference type="InterPro" id="IPR049943">
    <property type="entry name" value="Ser_HO-MeTrfase-like"/>
</dbReference>
<dbReference type="InterPro" id="IPR019798">
    <property type="entry name" value="Ser_HO-MeTrfase_PLP_BS"/>
</dbReference>
<dbReference type="InterPro" id="IPR039429">
    <property type="entry name" value="SHMT-like_dom"/>
</dbReference>
<dbReference type="NCBIfam" id="NF000586">
    <property type="entry name" value="PRK00011.1"/>
    <property type="match status" value="1"/>
</dbReference>
<dbReference type="PANTHER" id="PTHR11680">
    <property type="entry name" value="SERINE HYDROXYMETHYLTRANSFERASE"/>
    <property type="match status" value="1"/>
</dbReference>
<dbReference type="PANTHER" id="PTHR11680:SF35">
    <property type="entry name" value="SERINE HYDROXYMETHYLTRANSFERASE 1"/>
    <property type="match status" value="1"/>
</dbReference>
<dbReference type="Pfam" id="PF00464">
    <property type="entry name" value="SHMT"/>
    <property type="match status" value="1"/>
</dbReference>
<dbReference type="PIRSF" id="PIRSF000412">
    <property type="entry name" value="SHMT"/>
    <property type="match status" value="1"/>
</dbReference>
<dbReference type="SUPFAM" id="SSF53383">
    <property type="entry name" value="PLP-dependent transferases"/>
    <property type="match status" value="1"/>
</dbReference>
<dbReference type="PROSITE" id="PS00096">
    <property type="entry name" value="SHMT"/>
    <property type="match status" value="1"/>
</dbReference>
<gene>
    <name evidence="1" type="primary">glyA</name>
    <name type="ordered locus">PMN2A_1624</name>
</gene>
<name>GLYA_PROMT</name>
<organism>
    <name type="scientific">Prochlorococcus marinus (strain NATL2A)</name>
    <dbReference type="NCBI Taxonomy" id="59920"/>
    <lineage>
        <taxon>Bacteria</taxon>
        <taxon>Bacillati</taxon>
        <taxon>Cyanobacteriota</taxon>
        <taxon>Cyanophyceae</taxon>
        <taxon>Synechococcales</taxon>
        <taxon>Prochlorococcaceae</taxon>
        <taxon>Prochlorococcus</taxon>
    </lineage>
</organism>
<proteinExistence type="inferred from homology"/>
<comment type="function">
    <text evidence="1">Catalyzes the reversible interconversion of serine and glycine with tetrahydrofolate (THF) serving as the one-carbon carrier. This reaction serves as the major source of one-carbon groups required for the biosynthesis of purines, thymidylate, methionine, and other important biomolecules. Also exhibits THF-independent aldolase activity toward beta-hydroxyamino acids, producing glycine and aldehydes, via a retro-aldol mechanism.</text>
</comment>
<comment type="catalytic activity">
    <reaction evidence="1">
        <text>(6R)-5,10-methylene-5,6,7,8-tetrahydrofolate + glycine + H2O = (6S)-5,6,7,8-tetrahydrofolate + L-serine</text>
        <dbReference type="Rhea" id="RHEA:15481"/>
        <dbReference type="ChEBI" id="CHEBI:15377"/>
        <dbReference type="ChEBI" id="CHEBI:15636"/>
        <dbReference type="ChEBI" id="CHEBI:33384"/>
        <dbReference type="ChEBI" id="CHEBI:57305"/>
        <dbReference type="ChEBI" id="CHEBI:57453"/>
        <dbReference type="EC" id="2.1.2.1"/>
    </reaction>
</comment>
<comment type="cofactor">
    <cofactor evidence="1">
        <name>pyridoxal 5'-phosphate</name>
        <dbReference type="ChEBI" id="CHEBI:597326"/>
    </cofactor>
</comment>
<comment type="pathway">
    <text evidence="1">One-carbon metabolism; tetrahydrofolate interconversion.</text>
</comment>
<comment type="pathway">
    <text evidence="1">Amino-acid biosynthesis; glycine biosynthesis; glycine from L-serine: step 1/1.</text>
</comment>
<comment type="subunit">
    <text evidence="1">Homodimer.</text>
</comment>
<comment type="subcellular location">
    <subcellularLocation>
        <location evidence="1">Cytoplasm</location>
    </subcellularLocation>
</comment>
<comment type="similarity">
    <text evidence="1">Belongs to the SHMT family.</text>
</comment>
<sequence length="411" mass="44723">MKCDPSIAKLINNELSRQETHLELIASENFASKAVMEAQGSVLTNKYAEGLPNKRYYGGCEYVDGVEQLAIDRAKNLFGANWANVQPHSGAQANFAVFLSLLKPGDTIMGMDLSHGGHLTHGSPVNVSGKWFKTCHYEVDKKTEMLDMDAIRKKAIENQPKLIICGFSAYPRKIDFKAFRSIADEVNAYLLADIAHIAGLVASGLHPSPIPYCDVVTTTTHKTLRGPRGGLILSKDKEIGKKLDKAVFPGTQGGPLEHVIAAKAVAFKEASAPEFKIYSQKVISNAKVLSNQLQKRGISIVSKGTDNHIVLLDLRSIGMTGKVADQLVSDIKITANKNTVPFDPESPFVTSGLRLGSAALTTRGFNEQAFGDVGNVIADRLLNPNDEDIKEKSINKVSELCNKFPLYSENI</sequence>
<keyword id="KW-0028">Amino-acid biosynthesis</keyword>
<keyword id="KW-0963">Cytoplasm</keyword>
<keyword id="KW-0554">One-carbon metabolism</keyword>
<keyword id="KW-0663">Pyridoxal phosphate</keyword>
<keyword id="KW-1185">Reference proteome</keyword>
<keyword id="KW-0808">Transferase</keyword>
<accession>Q46HB6</accession>
<protein>
    <recommendedName>
        <fullName evidence="1">Serine hydroxymethyltransferase</fullName>
        <shortName evidence="1">SHMT</shortName>
        <shortName evidence="1">Serine methylase</shortName>
        <ecNumber evidence="1">2.1.2.1</ecNumber>
    </recommendedName>
</protein>
<reference key="1">
    <citation type="journal article" date="2007" name="PLoS Genet.">
        <title>Patterns and implications of gene gain and loss in the evolution of Prochlorococcus.</title>
        <authorList>
            <person name="Kettler G.C."/>
            <person name="Martiny A.C."/>
            <person name="Huang K."/>
            <person name="Zucker J."/>
            <person name="Coleman M.L."/>
            <person name="Rodrigue S."/>
            <person name="Chen F."/>
            <person name="Lapidus A."/>
            <person name="Ferriera S."/>
            <person name="Johnson J."/>
            <person name="Steglich C."/>
            <person name="Church G.M."/>
            <person name="Richardson P."/>
            <person name="Chisholm S.W."/>
        </authorList>
    </citation>
    <scope>NUCLEOTIDE SEQUENCE [LARGE SCALE GENOMIC DNA]</scope>
    <source>
        <strain>NATL2A</strain>
    </source>
</reference>
<evidence type="ECO:0000255" key="1">
    <source>
        <dbReference type="HAMAP-Rule" id="MF_00051"/>
    </source>
</evidence>